<protein>
    <recommendedName>
        <fullName evidence="1">ATP-dependent zinc metalloprotease FtsH 1</fullName>
        <ecNumber evidence="1">3.4.24.-</ecNumber>
    </recommendedName>
</protein>
<keyword id="KW-0067">ATP-binding</keyword>
<keyword id="KW-1003">Cell membrane</keyword>
<keyword id="KW-0378">Hydrolase</keyword>
<keyword id="KW-0472">Membrane</keyword>
<keyword id="KW-0479">Metal-binding</keyword>
<keyword id="KW-0482">Metalloprotease</keyword>
<keyword id="KW-0547">Nucleotide-binding</keyword>
<keyword id="KW-0645">Protease</keyword>
<keyword id="KW-0812">Transmembrane</keyword>
<keyword id="KW-1133">Transmembrane helix</keyword>
<keyword id="KW-0862">Zinc</keyword>
<gene>
    <name evidence="1" type="primary">ftsH1</name>
    <name type="ordered locus">Teth514_0793</name>
</gene>
<proteinExistence type="inferred from homology"/>
<organism>
    <name type="scientific">Thermoanaerobacter sp. (strain X514)</name>
    <dbReference type="NCBI Taxonomy" id="399726"/>
    <lineage>
        <taxon>Bacteria</taxon>
        <taxon>Bacillati</taxon>
        <taxon>Bacillota</taxon>
        <taxon>Clostridia</taxon>
        <taxon>Thermoanaerobacterales</taxon>
        <taxon>Thermoanaerobacteraceae</taxon>
        <taxon>Thermoanaerobacter</taxon>
    </lineage>
</organism>
<reference key="1">
    <citation type="submission" date="2008-01" db="EMBL/GenBank/DDBJ databases">
        <title>Complete sequence of Thermoanaerobacter sp. X514.</title>
        <authorList>
            <consortium name="US DOE Joint Genome Institute"/>
            <person name="Copeland A."/>
            <person name="Lucas S."/>
            <person name="Lapidus A."/>
            <person name="Barry K."/>
            <person name="Glavina del Rio T."/>
            <person name="Dalin E."/>
            <person name="Tice H."/>
            <person name="Pitluck S."/>
            <person name="Bruce D."/>
            <person name="Goodwin L."/>
            <person name="Saunders E."/>
            <person name="Brettin T."/>
            <person name="Detter J.C."/>
            <person name="Han C."/>
            <person name="Schmutz J."/>
            <person name="Larimer F."/>
            <person name="Land M."/>
            <person name="Hauser L."/>
            <person name="Kyrpides N."/>
            <person name="Kim E."/>
            <person name="Hemme C."/>
            <person name="Fields M.W."/>
            <person name="He Z."/>
            <person name="Zhou J."/>
            <person name="Richardson P."/>
        </authorList>
    </citation>
    <scope>NUCLEOTIDE SEQUENCE [LARGE SCALE GENOMIC DNA]</scope>
    <source>
        <strain>X514</strain>
    </source>
</reference>
<sequence length="611" mass="68035">MNDNNKIIRSMVLYLLIFIAIYAMVQLYSQSTEPITDIDYGQLIKYIDANQVKSITLVGNDVKGVLKNGTEFKSRVPDVTNFMSFVNPYILQGKLDFKSEPQVGPPWWVQMLPSLFLIVIFIIFWYIFMQQAQGGGGSKVMSFGKSRARMITDKDKRVTFNDVAGADEEKEELQEIVEFLKYPKKFLELGARIPKGVLLVGPPGTGKTLLAKAVAGEAGVPFFSISGSDFVEMFVGVGAARVRDLFDQAKKNAPCIVFIDEIDAVGRQRGAGLGGGHDEREQTLNQLLVEMDGFSVNEGIIVIAATNRPDILDPALLRPGRFDRHITVGIPDIKGREEILKIHSRNKPLAPDVSLQVLARRTPGFTGADLENLMNEAALLAARRGLKQITMAELEEAITRVIAGPEKRSRIMSEKDKKLVAYHEAGHAVVAKLLPNTPPVHEVTIIPRGRAGGYTMLLPEEDKYYMSKSEMMDEIVHLLGGRVAESLVLNDISTGAQNDIERATNIARKMVTEYGMSERLGPMTFGTKSEEVFLGRDLGRTRNYSEEVAAEIDREIKRIIEEAYKRAESLLKENIDKLHRVAKALIEKEKLNGEEFEKVFNGEDIEGVQFA</sequence>
<comment type="function">
    <text evidence="1">Acts as a processive, ATP-dependent zinc metallopeptidase for both cytoplasmic and membrane proteins. Plays a role in the quality control of integral membrane proteins.</text>
</comment>
<comment type="cofactor">
    <cofactor evidence="1">
        <name>Zn(2+)</name>
        <dbReference type="ChEBI" id="CHEBI:29105"/>
    </cofactor>
    <text evidence="1">Binds 1 zinc ion per subunit.</text>
</comment>
<comment type="subunit">
    <text evidence="1">Homohexamer.</text>
</comment>
<comment type="subcellular location">
    <subcellularLocation>
        <location evidence="1">Cell membrane</location>
        <topology evidence="1">Multi-pass membrane protein</topology>
        <orientation evidence="1">Cytoplasmic side</orientation>
    </subcellularLocation>
</comment>
<comment type="similarity">
    <text evidence="1">In the central section; belongs to the AAA ATPase family.</text>
</comment>
<comment type="similarity">
    <text evidence="1">In the C-terminal section; belongs to the peptidase M41 family.</text>
</comment>
<evidence type="ECO:0000255" key="1">
    <source>
        <dbReference type="HAMAP-Rule" id="MF_01458"/>
    </source>
</evidence>
<feature type="chain" id="PRO_5000304475" description="ATP-dependent zinc metalloprotease FtsH 1">
    <location>
        <begin position="1"/>
        <end position="611"/>
    </location>
</feature>
<feature type="topological domain" description="Cytoplasmic" evidence="1">
    <location>
        <begin position="1"/>
        <end position="6"/>
    </location>
</feature>
<feature type="transmembrane region" description="Helical" evidence="1">
    <location>
        <begin position="7"/>
        <end position="27"/>
    </location>
</feature>
<feature type="topological domain" description="Extracellular" evidence="1">
    <location>
        <begin position="28"/>
        <end position="107"/>
    </location>
</feature>
<feature type="transmembrane region" description="Helical" evidence="1">
    <location>
        <begin position="108"/>
        <end position="128"/>
    </location>
</feature>
<feature type="topological domain" description="Cytoplasmic" evidence="1">
    <location>
        <begin position="129"/>
        <end position="611"/>
    </location>
</feature>
<feature type="active site" evidence="1">
    <location>
        <position position="424"/>
    </location>
</feature>
<feature type="binding site" evidence="1">
    <location>
        <begin position="124"/>
        <end position="131"/>
    </location>
    <ligand>
        <name>ATP</name>
        <dbReference type="ChEBI" id="CHEBI:30616"/>
    </ligand>
</feature>
<feature type="binding site" evidence="1">
    <location>
        <position position="423"/>
    </location>
    <ligand>
        <name>Zn(2+)</name>
        <dbReference type="ChEBI" id="CHEBI:29105"/>
        <note>catalytic</note>
    </ligand>
</feature>
<feature type="binding site" evidence="1">
    <location>
        <position position="427"/>
    </location>
    <ligand>
        <name>Zn(2+)</name>
        <dbReference type="ChEBI" id="CHEBI:29105"/>
        <note>catalytic</note>
    </ligand>
</feature>
<feature type="binding site" evidence="1">
    <location>
        <position position="499"/>
    </location>
    <ligand>
        <name>Zn(2+)</name>
        <dbReference type="ChEBI" id="CHEBI:29105"/>
        <note>catalytic</note>
    </ligand>
</feature>
<dbReference type="EC" id="3.4.24.-" evidence="1"/>
<dbReference type="EMBL" id="CP000923">
    <property type="protein sequence ID" value="ABY92096.1"/>
    <property type="molecule type" value="Genomic_DNA"/>
</dbReference>
<dbReference type="SMR" id="B0K5A3"/>
<dbReference type="MEROPS" id="M41.021"/>
<dbReference type="KEGG" id="tex:Teth514_0793"/>
<dbReference type="HOGENOM" id="CLU_000688_16_2_9"/>
<dbReference type="Proteomes" id="UP000002155">
    <property type="component" value="Chromosome"/>
</dbReference>
<dbReference type="GO" id="GO:0005886">
    <property type="term" value="C:plasma membrane"/>
    <property type="evidence" value="ECO:0007669"/>
    <property type="project" value="UniProtKB-SubCell"/>
</dbReference>
<dbReference type="GO" id="GO:0005524">
    <property type="term" value="F:ATP binding"/>
    <property type="evidence" value="ECO:0007669"/>
    <property type="project" value="UniProtKB-UniRule"/>
</dbReference>
<dbReference type="GO" id="GO:0016887">
    <property type="term" value="F:ATP hydrolysis activity"/>
    <property type="evidence" value="ECO:0007669"/>
    <property type="project" value="UniProtKB-UniRule"/>
</dbReference>
<dbReference type="GO" id="GO:0004176">
    <property type="term" value="F:ATP-dependent peptidase activity"/>
    <property type="evidence" value="ECO:0007669"/>
    <property type="project" value="InterPro"/>
</dbReference>
<dbReference type="GO" id="GO:0004222">
    <property type="term" value="F:metalloendopeptidase activity"/>
    <property type="evidence" value="ECO:0007669"/>
    <property type="project" value="InterPro"/>
</dbReference>
<dbReference type="GO" id="GO:0008270">
    <property type="term" value="F:zinc ion binding"/>
    <property type="evidence" value="ECO:0007669"/>
    <property type="project" value="UniProtKB-UniRule"/>
</dbReference>
<dbReference type="GO" id="GO:0030163">
    <property type="term" value="P:protein catabolic process"/>
    <property type="evidence" value="ECO:0007669"/>
    <property type="project" value="UniProtKB-UniRule"/>
</dbReference>
<dbReference type="GO" id="GO:0006508">
    <property type="term" value="P:proteolysis"/>
    <property type="evidence" value="ECO:0007669"/>
    <property type="project" value="UniProtKB-KW"/>
</dbReference>
<dbReference type="CDD" id="cd19501">
    <property type="entry name" value="RecA-like_FtsH"/>
    <property type="match status" value="1"/>
</dbReference>
<dbReference type="FunFam" id="1.10.8.60:FF:000001">
    <property type="entry name" value="ATP-dependent zinc metalloprotease FtsH"/>
    <property type="match status" value="1"/>
</dbReference>
<dbReference type="FunFam" id="1.20.58.760:FF:000001">
    <property type="entry name" value="ATP-dependent zinc metalloprotease FtsH"/>
    <property type="match status" value="1"/>
</dbReference>
<dbReference type="FunFam" id="3.40.50.300:FF:000001">
    <property type="entry name" value="ATP-dependent zinc metalloprotease FtsH"/>
    <property type="match status" value="1"/>
</dbReference>
<dbReference type="Gene3D" id="1.10.8.60">
    <property type="match status" value="1"/>
</dbReference>
<dbReference type="Gene3D" id="3.30.720.210">
    <property type="match status" value="1"/>
</dbReference>
<dbReference type="Gene3D" id="3.40.50.300">
    <property type="entry name" value="P-loop containing nucleotide triphosphate hydrolases"/>
    <property type="match status" value="1"/>
</dbReference>
<dbReference type="Gene3D" id="1.20.58.760">
    <property type="entry name" value="Peptidase M41"/>
    <property type="match status" value="1"/>
</dbReference>
<dbReference type="HAMAP" id="MF_01458">
    <property type="entry name" value="FtsH"/>
    <property type="match status" value="1"/>
</dbReference>
<dbReference type="InterPro" id="IPR003593">
    <property type="entry name" value="AAA+_ATPase"/>
</dbReference>
<dbReference type="InterPro" id="IPR041569">
    <property type="entry name" value="AAA_lid_3"/>
</dbReference>
<dbReference type="InterPro" id="IPR003959">
    <property type="entry name" value="ATPase_AAA_core"/>
</dbReference>
<dbReference type="InterPro" id="IPR003960">
    <property type="entry name" value="ATPase_AAA_CS"/>
</dbReference>
<dbReference type="InterPro" id="IPR005936">
    <property type="entry name" value="FtsH"/>
</dbReference>
<dbReference type="InterPro" id="IPR027417">
    <property type="entry name" value="P-loop_NTPase"/>
</dbReference>
<dbReference type="InterPro" id="IPR011546">
    <property type="entry name" value="Pept_M41_FtsH_extracell"/>
</dbReference>
<dbReference type="InterPro" id="IPR000642">
    <property type="entry name" value="Peptidase_M41"/>
</dbReference>
<dbReference type="InterPro" id="IPR037219">
    <property type="entry name" value="Peptidase_M41-like"/>
</dbReference>
<dbReference type="NCBIfam" id="TIGR01241">
    <property type="entry name" value="FtsH_fam"/>
    <property type="match status" value="1"/>
</dbReference>
<dbReference type="PANTHER" id="PTHR23076:SF113">
    <property type="entry name" value="ATP-DEPENDENT ZINC METALLOPROTEASE FTSH 1, CHLOROPLASTIC-RELATED"/>
    <property type="match status" value="1"/>
</dbReference>
<dbReference type="PANTHER" id="PTHR23076">
    <property type="entry name" value="METALLOPROTEASE M41 FTSH"/>
    <property type="match status" value="1"/>
</dbReference>
<dbReference type="Pfam" id="PF00004">
    <property type="entry name" value="AAA"/>
    <property type="match status" value="1"/>
</dbReference>
<dbReference type="Pfam" id="PF17862">
    <property type="entry name" value="AAA_lid_3"/>
    <property type="match status" value="1"/>
</dbReference>
<dbReference type="Pfam" id="PF06480">
    <property type="entry name" value="FtsH_ext"/>
    <property type="match status" value="1"/>
</dbReference>
<dbReference type="Pfam" id="PF01434">
    <property type="entry name" value="Peptidase_M41"/>
    <property type="match status" value="1"/>
</dbReference>
<dbReference type="SMART" id="SM00382">
    <property type="entry name" value="AAA"/>
    <property type="match status" value="1"/>
</dbReference>
<dbReference type="SUPFAM" id="SSF140990">
    <property type="entry name" value="FtsH protease domain-like"/>
    <property type="match status" value="1"/>
</dbReference>
<dbReference type="SUPFAM" id="SSF52540">
    <property type="entry name" value="P-loop containing nucleoside triphosphate hydrolases"/>
    <property type="match status" value="1"/>
</dbReference>
<dbReference type="PROSITE" id="PS00674">
    <property type="entry name" value="AAA"/>
    <property type="match status" value="1"/>
</dbReference>
<name>FTSH1_THEPX</name>
<accession>B0K5A3</accession>